<name>OAT2_STAAS</name>
<sequence>MTKSEKIIELTNHYGAHNYLPLPIVISEAEGVWVKDPEGNKYMDMLSAYSAVNQGHRHPKIIQALKDQADKVTLVSRAFHSDNLGEWYEKICKLAGKDKALPMNTGAEAVETALKAARRWAYDVKGIEPNKAEIIAFNGNFHGRTMAPVSLSSEAEYQRGYGPLLDGFRKVDFGDVDALKAAINENTAAVLVEPIQGEAGINIPPEGYLKAIRELCDEHNVLFIADEIQAGLGRSGKLFATDWDNVKPDVYILGKALGGGVFPISVVLADKEVLDVFTPGSHGSTFGGNPLACAASIAALDVIVDEDLPGRSLELGDYFKEQLKQIDHPSIKEVRGRGLFIGVELNESARPYCEALKEEGLLCKETHDTVIRFAPPLIITKEELDLALEKIRHVFQ</sequence>
<feature type="chain" id="PRO_0000112789" description="Ornithine aminotransferase 2">
    <location>
        <begin position="1"/>
        <end position="396"/>
    </location>
</feature>
<feature type="modified residue" description="N6-(pyridoxal phosphate)lysine" evidence="1">
    <location>
        <position position="255"/>
    </location>
</feature>
<protein>
    <recommendedName>
        <fullName evidence="1">Ornithine aminotransferase 2</fullName>
        <shortName evidence="1">OAT 2</shortName>
        <ecNumber evidence="1">2.6.1.13</ecNumber>
    </recommendedName>
    <alternativeName>
        <fullName evidence="1">Ornithine--oxo-acid aminotransferase 2</fullName>
    </alternativeName>
</protein>
<organism>
    <name type="scientific">Staphylococcus aureus (strain MSSA476)</name>
    <dbReference type="NCBI Taxonomy" id="282459"/>
    <lineage>
        <taxon>Bacteria</taxon>
        <taxon>Bacillati</taxon>
        <taxon>Bacillota</taxon>
        <taxon>Bacilli</taxon>
        <taxon>Bacillales</taxon>
        <taxon>Staphylococcaceae</taxon>
        <taxon>Staphylococcus</taxon>
    </lineage>
</organism>
<proteinExistence type="inferred from homology"/>
<evidence type="ECO:0000255" key="1">
    <source>
        <dbReference type="HAMAP-Rule" id="MF_01689"/>
    </source>
</evidence>
<dbReference type="EC" id="2.6.1.13" evidence="1"/>
<dbReference type="EMBL" id="BX571857">
    <property type="protein sequence ID" value="CAG42602.1"/>
    <property type="molecule type" value="Genomic_DNA"/>
</dbReference>
<dbReference type="RefSeq" id="WP_000167314.1">
    <property type="nucleotide sequence ID" value="NC_002953.3"/>
</dbReference>
<dbReference type="SMR" id="Q6GAW9"/>
<dbReference type="KEGG" id="sas:SAS0827"/>
<dbReference type="HOGENOM" id="CLU_016922_10_1_9"/>
<dbReference type="UniPathway" id="UPA00098">
    <property type="reaction ID" value="UER00358"/>
</dbReference>
<dbReference type="GO" id="GO:0005737">
    <property type="term" value="C:cytoplasm"/>
    <property type="evidence" value="ECO:0007669"/>
    <property type="project" value="UniProtKB-SubCell"/>
</dbReference>
<dbReference type="GO" id="GO:0042802">
    <property type="term" value="F:identical protein binding"/>
    <property type="evidence" value="ECO:0007669"/>
    <property type="project" value="TreeGrafter"/>
</dbReference>
<dbReference type="GO" id="GO:0004587">
    <property type="term" value="F:ornithine aminotransferase activity"/>
    <property type="evidence" value="ECO:0007669"/>
    <property type="project" value="UniProtKB-UniRule"/>
</dbReference>
<dbReference type="GO" id="GO:0030170">
    <property type="term" value="F:pyridoxal phosphate binding"/>
    <property type="evidence" value="ECO:0007669"/>
    <property type="project" value="UniProtKB-UniRule"/>
</dbReference>
<dbReference type="GO" id="GO:0055129">
    <property type="term" value="P:L-proline biosynthetic process"/>
    <property type="evidence" value="ECO:0007669"/>
    <property type="project" value="UniProtKB-UniRule"/>
</dbReference>
<dbReference type="CDD" id="cd00610">
    <property type="entry name" value="OAT_like"/>
    <property type="match status" value="1"/>
</dbReference>
<dbReference type="FunFam" id="3.40.640.10:FF:000011">
    <property type="entry name" value="Ornithine aminotransferase"/>
    <property type="match status" value="1"/>
</dbReference>
<dbReference type="Gene3D" id="3.90.1150.10">
    <property type="entry name" value="Aspartate Aminotransferase, domain 1"/>
    <property type="match status" value="1"/>
</dbReference>
<dbReference type="Gene3D" id="3.40.640.10">
    <property type="entry name" value="Type I PLP-dependent aspartate aminotransferase-like (Major domain)"/>
    <property type="match status" value="1"/>
</dbReference>
<dbReference type="HAMAP" id="MF_01689">
    <property type="entry name" value="Ornith_aminotrans_3"/>
    <property type="match status" value="1"/>
</dbReference>
<dbReference type="InterPro" id="IPR005814">
    <property type="entry name" value="Aminotrans_3"/>
</dbReference>
<dbReference type="InterPro" id="IPR049704">
    <property type="entry name" value="Aminotrans_3_PPA_site"/>
</dbReference>
<dbReference type="InterPro" id="IPR050103">
    <property type="entry name" value="Class-III_PLP-dep_AT"/>
</dbReference>
<dbReference type="InterPro" id="IPR010164">
    <property type="entry name" value="Orn_aminotrans"/>
</dbReference>
<dbReference type="InterPro" id="IPR034757">
    <property type="entry name" value="Ornith_aminotrans_bact"/>
</dbReference>
<dbReference type="InterPro" id="IPR015424">
    <property type="entry name" value="PyrdxlP-dep_Trfase"/>
</dbReference>
<dbReference type="InterPro" id="IPR015421">
    <property type="entry name" value="PyrdxlP-dep_Trfase_major"/>
</dbReference>
<dbReference type="InterPro" id="IPR015422">
    <property type="entry name" value="PyrdxlP-dep_Trfase_small"/>
</dbReference>
<dbReference type="NCBIfam" id="TIGR01885">
    <property type="entry name" value="Orn_aminotrans"/>
    <property type="match status" value="1"/>
</dbReference>
<dbReference type="NCBIfam" id="NF002325">
    <property type="entry name" value="PRK01278.1"/>
    <property type="match status" value="1"/>
</dbReference>
<dbReference type="NCBIfam" id="NF003145">
    <property type="entry name" value="PRK04073.1"/>
    <property type="match status" value="1"/>
</dbReference>
<dbReference type="PANTHER" id="PTHR11986">
    <property type="entry name" value="AMINOTRANSFERASE CLASS III"/>
    <property type="match status" value="1"/>
</dbReference>
<dbReference type="PANTHER" id="PTHR11986:SF18">
    <property type="entry name" value="ORNITHINE AMINOTRANSFERASE, MITOCHONDRIAL"/>
    <property type="match status" value="1"/>
</dbReference>
<dbReference type="Pfam" id="PF00202">
    <property type="entry name" value="Aminotran_3"/>
    <property type="match status" value="1"/>
</dbReference>
<dbReference type="PIRSF" id="PIRSF000521">
    <property type="entry name" value="Transaminase_4ab_Lys_Orn"/>
    <property type="match status" value="1"/>
</dbReference>
<dbReference type="SUPFAM" id="SSF53383">
    <property type="entry name" value="PLP-dependent transferases"/>
    <property type="match status" value="1"/>
</dbReference>
<dbReference type="PROSITE" id="PS00600">
    <property type="entry name" value="AA_TRANSFER_CLASS_3"/>
    <property type="match status" value="1"/>
</dbReference>
<accession>Q6GAW9</accession>
<comment type="function">
    <text evidence="1">Catalyzes the interconversion of ornithine to glutamate semialdehyde.</text>
</comment>
<comment type="catalytic activity">
    <reaction evidence="1">
        <text>a 2-oxocarboxylate + L-ornithine = L-glutamate 5-semialdehyde + an L-alpha-amino acid</text>
        <dbReference type="Rhea" id="RHEA:13877"/>
        <dbReference type="ChEBI" id="CHEBI:35179"/>
        <dbReference type="ChEBI" id="CHEBI:46911"/>
        <dbReference type="ChEBI" id="CHEBI:58066"/>
        <dbReference type="ChEBI" id="CHEBI:59869"/>
        <dbReference type="EC" id="2.6.1.13"/>
    </reaction>
</comment>
<comment type="cofactor">
    <cofactor evidence="1">
        <name>pyridoxal 5'-phosphate</name>
        <dbReference type="ChEBI" id="CHEBI:597326"/>
    </cofactor>
</comment>
<comment type="pathway">
    <text evidence="1">Amino-acid biosynthesis; L-proline biosynthesis; L-glutamate 5-semialdehyde from L-ornithine: step 1/1.</text>
</comment>
<comment type="subcellular location">
    <subcellularLocation>
        <location evidence="1">Cytoplasm</location>
    </subcellularLocation>
</comment>
<comment type="similarity">
    <text evidence="1">Belongs to the class-III pyridoxal-phosphate-dependent aminotransferase family. OAT subfamily.</text>
</comment>
<keyword id="KW-0028">Amino-acid biosynthesis</keyword>
<keyword id="KW-0032">Aminotransferase</keyword>
<keyword id="KW-0963">Cytoplasm</keyword>
<keyword id="KW-0641">Proline biosynthesis</keyword>
<keyword id="KW-0663">Pyridoxal phosphate</keyword>
<keyword id="KW-0808">Transferase</keyword>
<gene>
    <name evidence="1" type="primary">rocD2</name>
    <name type="ordered locus">SAS0827</name>
</gene>
<reference key="1">
    <citation type="journal article" date="2004" name="Proc. Natl. Acad. Sci. U.S.A.">
        <title>Complete genomes of two clinical Staphylococcus aureus strains: evidence for the rapid evolution of virulence and drug resistance.</title>
        <authorList>
            <person name="Holden M.T.G."/>
            <person name="Feil E.J."/>
            <person name="Lindsay J.A."/>
            <person name="Peacock S.J."/>
            <person name="Day N.P.J."/>
            <person name="Enright M.C."/>
            <person name="Foster T.J."/>
            <person name="Moore C.E."/>
            <person name="Hurst L."/>
            <person name="Atkin R."/>
            <person name="Barron A."/>
            <person name="Bason N."/>
            <person name="Bentley S.D."/>
            <person name="Chillingworth C."/>
            <person name="Chillingworth T."/>
            <person name="Churcher C."/>
            <person name="Clark L."/>
            <person name="Corton C."/>
            <person name="Cronin A."/>
            <person name="Doggett J."/>
            <person name="Dowd L."/>
            <person name="Feltwell T."/>
            <person name="Hance Z."/>
            <person name="Harris B."/>
            <person name="Hauser H."/>
            <person name="Holroyd S."/>
            <person name="Jagels K."/>
            <person name="James K.D."/>
            <person name="Lennard N."/>
            <person name="Line A."/>
            <person name="Mayes R."/>
            <person name="Moule S."/>
            <person name="Mungall K."/>
            <person name="Ormond D."/>
            <person name="Quail M.A."/>
            <person name="Rabbinowitsch E."/>
            <person name="Rutherford K.M."/>
            <person name="Sanders M."/>
            <person name="Sharp S."/>
            <person name="Simmonds M."/>
            <person name="Stevens K."/>
            <person name="Whitehead S."/>
            <person name="Barrell B.G."/>
            <person name="Spratt B.G."/>
            <person name="Parkhill J."/>
        </authorList>
    </citation>
    <scope>NUCLEOTIDE SEQUENCE [LARGE SCALE GENOMIC DNA]</scope>
    <source>
        <strain>MSSA476</strain>
    </source>
</reference>